<sequence>MDRHVMEALGKARVVVENGRVVEVTEPKIKYCPLFAKHRGIKEITKESIKENIEFRIKDFGLFTKNRVVEESRYIVPFGASEILMSALKRKAIDVAVIVADCAGTIITSNPNLVQGLCGRISGIIETSPILEVIEKIEKAGGVVLNKKTAEINQFEGVKKAIELDYKKIAVTVTNLEDAKRCKSLENDEIKILTFGVHLTGIEGSEEIAKYFDLVTACASKVLREKLKGKIKAQIGKTIPIFALSDFGKEILLERAKDLDKVLISIENLPVLNDNQPKPLI</sequence>
<proteinExistence type="predicted"/>
<keyword id="KW-1185">Reference proteome</keyword>
<feature type="chain" id="PRO_0000106672" description="Uncharacterized protein MJ0054">
    <location>
        <begin position="1"/>
        <end position="281"/>
    </location>
</feature>
<protein>
    <recommendedName>
        <fullName>Uncharacterized protein MJ0054</fullName>
    </recommendedName>
</protein>
<name>Y054_METJA</name>
<gene>
    <name type="ordered locus">MJ0054</name>
</gene>
<accession>Q60361</accession>
<organism>
    <name type="scientific">Methanocaldococcus jannaschii (strain ATCC 43067 / DSM 2661 / JAL-1 / JCM 10045 / NBRC 100440)</name>
    <name type="common">Methanococcus jannaschii</name>
    <dbReference type="NCBI Taxonomy" id="243232"/>
    <lineage>
        <taxon>Archaea</taxon>
        <taxon>Methanobacteriati</taxon>
        <taxon>Methanobacteriota</taxon>
        <taxon>Methanomada group</taxon>
        <taxon>Methanococci</taxon>
        <taxon>Methanococcales</taxon>
        <taxon>Methanocaldococcaceae</taxon>
        <taxon>Methanocaldococcus</taxon>
    </lineage>
</organism>
<dbReference type="EMBL" id="L77117">
    <property type="protein sequence ID" value="AAB98034.1"/>
    <property type="molecule type" value="Genomic_DNA"/>
</dbReference>
<dbReference type="PIR" id="F64306">
    <property type="entry name" value="F64306"/>
</dbReference>
<dbReference type="RefSeq" id="WP_010869546.1">
    <property type="nucleotide sequence ID" value="NC_000909.1"/>
</dbReference>
<dbReference type="FunCoup" id="Q60361">
    <property type="interactions" value="1"/>
</dbReference>
<dbReference type="STRING" id="243232.MJ_0054"/>
<dbReference type="PaxDb" id="243232-MJ_0054"/>
<dbReference type="EnsemblBacteria" id="AAB98034">
    <property type="protein sequence ID" value="AAB98034"/>
    <property type="gene ID" value="MJ_0054"/>
</dbReference>
<dbReference type="GeneID" id="1450893"/>
<dbReference type="KEGG" id="mja:MJ_0054"/>
<dbReference type="eggNOG" id="arCOG04893">
    <property type="taxonomic scope" value="Archaea"/>
</dbReference>
<dbReference type="HOGENOM" id="CLU_982163_0_0_2"/>
<dbReference type="InParanoid" id="Q60361"/>
<dbReference type="OrthoDB" id="358516at2157"/>
<dbReference type="PhylomeDB" id="Q60361"/>
<dbReference type="Proteomes" id="UP000000805">
    <property type="component" value="Chromosome"/>
</dbReference>
<dbReference type="InterPro" id="IPR009181">
    <property type="entry name" value="Methan_mark_8"/>
</dbReference>
<dbReference type="NCBIfam" id="TIGR03275">
    <property type="entry name" value="methan_mark_8"/>
    <property type="match status" value="1"/>
</dbReference>
<dbReference type="Pfam" id="PF09872">
    <property type="entry name" value="DUF2099"/>
    <property type="match status" value="1"/>
</dbReference>
<dbReference type="PIRSF" id="PIRSF004929">
    <property type="entry name" value="UCP004929"/>
    <property type="match status" value="1"/>
</dbReference>
<reference key="1">
    <citation type="journal article" date="1996" name="Science">
        <title>Complete genome sequence of the methanogenic archaeon, Methanococcus jannaschii.</title>
        <authorList>
            <person name="Bult C.J."/>
            <person name="White O."/>
            <person name="Olsen G.J."/>
            <person name="Zhou L."/>
            <person name="Fleischmann R.D."/>
            <person name="Sutton G.G."/>
            <person name="Blake J.A."/>
            <person name="FitzGerald L.M."/>
            <person name="Clayton R.A."/>
            <person name="Gocayne J.D."/>
            <person name="Kerlavage A.R."/>
            <person name="Dougherty B.A."/>
            <person name="Tomb J.-F."/>
            <person name="Adams M.D."/>
            <person name="Reich C.I."/>
            <person name="Overbeek R."/>
            <person name="Kirkness E.F."/>
            <person name="Weinstock K.G."/>
            <person name="Merrick J.M."/>
            <person name="Glodek A."/>
            <person name="Scott J.L."/>
            <person name="Geoghagen N.S.M."/>
            <person name="Weidman J.F."/>
            <person name="Fuhrmann J.L."/>
            <person name="Nguyen D."/>
            <person name="Utterback T.R."/>
            <person name="Kelley J.M."/>
            <person name="Peterson J.D."/>
            <person name="Sadow P.W."/>
            <person name="Hanna M.C."/>
            <person name="Cotton M.D."/>
            <person name="Roberts K.M."/>
            <person name="Hurst M.A."/>
            <person name="Kaine B.P."/>
            <person name="Borodovsky M."/>
            <person name="Klenk H.-P."/>
            <person name="Fraser C.M."/>
            <person name="Smith H.O."/>
            <person name="Woese C.R."/>
            <person name="Venter J.C."/>
        </authorList>
    </citation>
    <scope>NUCLEOTIDE SEQUENCE [LARGE SCALE GENOMIC DNA]</scope>
    <source>
        <strain>ATCC 43067 / DSM 2661 / JAL-1 / JCM 10045 / NBRC 100440</strain>
    </source>
</reference>